<reference key="1">
    <citation type="journal article" date="2002" name="Nature">
        <title>Genome sequence of the plant pathogen Ralstonia solanacearum.</title>
        <authorList>
            <person name="Salanoubat M."/>
            <person name="Genin S."/>
            <person name="Artiguenave F."/>
            <person name="Gouzy J."/>
            <person name="Mangenot S."/>
            <person name="Arlat M."/>
            <person name="Billault A."/>
            <person name="Brottier P."/>
            <person name="Camus J.-C."/>
            <person name="Cattolico L."/>
            <person name="Chandler M."/>
            <person name="Choisne N."/>
            <person name="Claudel-Renard C."/>
            <person name="Cunnac S."/>
            <person name="Demange N."/>
            <person name="Gaspin C."/>
            <person name="Lavie M."/>
            <person name="Moisan A."/>
            <person name="Robert C."/>
            <person name="Saurin W."/>
            <person name="Schiex T."/>
            <person name="Siguier P."/>
            <person name="Thebault P."/>
            <person name="Whalen M."/>
            <person name="Wincker P."/>
            <person name="Levy M."/>
            <person name="Weissenbach J."/>
            <person name="Boucher C.A."/>
        </authorList>
    </citation>
    <scope>NUCLEOTIDE SEQUENCE [LARGE SCALE GENOMIC DNA]</scope>
    <source>
        <strain>ATCC BAA-1114 / GMI1000</strain>
    </source>
</reference>
<accession>P58593</accession>
<keyword id="KW-0067">ATP-binding</keyword>
<keyword id="KW-0997">Cell inner membrane</keyword>
<keyword id="KW-1003">Cell membrane</keyword>
<keyword id="KW-0270">Exopolysaccharide synthesis</keyword>
<keyword id="KW-0418">Kinase</keyword>
<keyword id="KW-0472">Membrane</keyword>
<keyword id="KW-0547">Nucleotide-binding</keyword>
<keyword id="KW-0614">Plasmid</keyword>
<keyword id="KW-1185">Reference proteome</keyword>
<keyword id="KW-0808">Transferase</keyword>
<keyword id="KW-0812">Transmembrane</keyword>
<keyword id="KW-1133">Transmembrane helix</keyword>
<keyword id="KW-0829">Tyrosine-protein kinase</keyword>
<keyword id="KW-0843">Virulence</keyword>
<gene>
    <name type="primary">epsB</name>
    <name type="ordered locus">RSp1018</name>
    <name type="ORF">RS02356</name>
</gene>
<evidence type="ECO:0000250" key="1"/>
<evidence type="ECO:0000255" key="2"/>
<evidence type="ECO:0000305" key="3"/>
<proteinExistence type="inferred from homology"/>
<comment type="function">
    <text evidence="1">Probably involved in polymerization and/or export of exopolysaccharide EPS I which functions as a virulence factor. May be involved in an ATP-dependent process in the pathway for EPS I production, possibly export of the trimeric repeat units across the inner membrane or their polymerization (By similarity).</text>
</comment>
<comment type="catalytic activity">
    <reaction>
        <text>L-tyrosyl-[protein] + ATP = O-phospho-L-tyrosyl-[protein] + ADP + H(+)</text>
        <dbReference type="Rhea" id="RHEA:10596"/>
        <dbReference type="Rhea" id="RHEA-COMP:10136"/>
        <dbReference type="Rhea" id="RHEA-COMP:20101"/>
        <dbReference type="ChEBI" id="CHEBI:15378"/>
        <dbReference type="ChEBI" id="CHEBI:30616"/>
        <dbReference type="ChEBI" id="CHEBI:46858"/>
        <dbReference type="ChEBI" id="CHEBI:61978"/>
        <dbReference type="ChEBI" id="CHEBI:456216"/>
    </reaction>
</comment>
<comment type="subcellular location">
    <subcellularLocation>
        <location>Cell inner membrane</location>
        <topology>Multi-pass membrane protein</topology>
    </subcellularLocation>
</comment>
<comment type="similarity">
    <text evidence="3">Belongs to the etk/wzc family.</text>
</comment>
<protein>
    <recommendedName>
        <fullName>Putative tyrosine-protein kinase EpsB</fullName>
        <ecNumber>2.7.10.-</ecNumber>
    </recommendedName>
    <alternativeName>
        <fullName>EPS I polysaccharide export protein EpsB</fullName>
    </alternativeName>
</protein>
<name>EPSB_RALN1</name>
<feature type="chain" id="PRO_0000212358" description="Putative tyrosine-protein kinase EpsB">
    <location>
        <begin position="1"/>
        <end position="751"/>
    </location>
</feature>
<feature type="topological domain" description="Cytoplasmic" evidence="2">
    <location>
        <begin position="1"/>
        <end position="31"/>
    </location>
</feature>
<feature type="transmembrane region" description="Helical" evidence="2">
    <location>
        <begin position="32"/>
        <end position="52"/>
    </location>
</feature>
<feature type="topological domain" description="Periplasmic" evidence="2">
    <location>
        <begin position="53"/>
        <end position="444"/>
    </location>
</feature>
<feature type="transmembrane region" description="Helical" evidence="2">
    <location>
        <begin position="445"/>
        <end position="465"/>
    </location>
</feature>
<feature type="topological domain" description="Cytoplasmic" evidence="2">
    <location>
        <begin position="466"/>
        <end position="751"/>
    </location>
</feature>
<geneLocation type="plasmid">
    <name>megaplasmid Rsp</name>
</geneLocation>
<sequence>MTQNLSQPPAVNAPESELDLVRYLDVLVANRWLIAGIAAVVMLLGATYAFLARPVYEADVLVQVEDNPNSAKSLLGDVSSLFDVKTDANAEIEILRSRMVVGKAVDNLHLYITAKPHYFPLIGAWVASRAKQLSEPGLFGLGGYTWGTELIDVDGFDVPEALEGQPFKLTALGNGRYRLENKSLDTPIEGVVGEPLEAKQSVGTIQLLVNTLAAKAGAAFELQRDSRLKTLEMLQDKLKISEKGKQSGIIGASLEGKNPALTAAIMNQIATEYVAQNIKRKAEEAERSLVFLDGLLPQLKLQLERAEMKYNEMRNLRGTFDLSEEGKAFLQESVTTETSLQELKQKRAELLTRFTASHPGVQAIDQQIAVMSGKVGAMTRRLKSLPNIEQDTVRLMRDVQVDNDLYVSLLNDMQQLKLVKAGKVGNVRLVDGAAVPEEPVKPKKLTVTALAGVLGVVLGVVAAFVRNTLFGGITEPQDIEEHTGLSVYATVPLSDVQIDLSSQLTTHKRGQYLLARRVPDDPSIESLRSLRTALQFAMQDSGNNLVVLTGPTPGVGKSFVSANLAAVIATGGKRVLLVDADMRKGYLHQYFGKDRKPGLLDLLAGDRSIEQVVHREVVPGLDFIATGLFPHNPSELLLNPRMVELMDTFRAQYDLVLIDTPPVLAVTDTAILAARAGTVLMVTRFERSTLGEIRETIKQLQHANVEVRGVVFNALDPNTYRYGYGSRYGRYRYVQYGYTSKPSAEAEAESA</sequence>
<organism>
    <name type="scientific">Ralstonia nicotianae (strain ATCC BAA-1114 / GMI1000)</name>
    <name type="common">Ralstonia solanacearum</name>
    <dbReference type="NCBI Taxonomy" id="267608"/>
    <lineage>
        <taxon>Bacteria</taxon>
        <taxon>Pseudomonadati</taxon>
        <taxon>Pseudomonadota</taxon>
        <taxon>Betaproteobacteria</taxon>
        <taxon>Burkholderiales</taxon>
        <taxon>Burkholderiaceae</taxon>
        <taxon>Ralstonia</taxon>
        <taxon>Ralstonia solanacearum species complex</taxon>
    </lineage>
</organism>
<dbReference type="EC" id="2.7.10.-"/>
<dbReference type="EMBL" id="AL646053">
    <property type="protein sequence ID" value="CAD18169.1"/>
    <property type="molecule type" value="Genomic_DNA"/>
</dbReference>
<dbReference type="RefSeq" id="WP_011004308.1">
    <property type="nucleotide sequence ID" value="NC_003296.1"/>
</dbReference>
<dbReference type="SMR" id="P58593"/>
<dbReference type="STRING" id="267608.RSp1018"/>
<dbReference type="EnsemblBacteria" id="CAD18169">
    <property type="protein sequence ID" value="CAD18169"/>
    <property type="gene ID" value="RSp1018"/>
</dbReference>
<dbReference type="KEGG" id="rso:RSp1018"/>
<dbReference type="PATRIC" id="fig|267608.8.peg.4499"/>
<dbReference type="eggNOG" id="COG0489">
    <property type="taxonomic scope" value="Bacteria"/>
</dbReference>
<dbReference type="eggNOG" id="COG3206">
    <property type="taxonomic scope" value="Bacteria"/>
</dbReference>
<dbReference type="HOGENOM" id="CLU_009912_0_0_4"/>
<dbReference type="Proteomes" id="UP000001436">
    <property type="component" value="Plasmid megaplasmid Rsp"/>
</dbReference>
<dbReference type="GO" id="GO:0005886">
    <property type="term" value="C:plasma membrane"/>
    <property type="evidence" value="ECO:0007669"/>
    <property type="project" value="UniProtKB-SubCell"/>
</dbReference>
<dbReference type="GO" id="GO:0005524">
    <property type="term" value="F:ATP binding"/>
    <property type="evidence" value="ECO:0007669"/>
    <property type="project" value="UniProtKB-KW"/>
</dbReference>
<dbReference type="GO" id="GO:0004713">
    <property type="term" value="F:protein tyrosine kinase activity"/>
    <property type="evidence" value="ECO:0007669"/>
    <property type="project" value="UniProtKB-KW"/>
</dbReference>
<dbReference type="GO" id="GO:0000271">
    <property type="term" value="P:polysaccharide biosynthetic process"/>
    <property type="evidence" value="ECO:0007669"/>
    <property type="project" value="UniProtKB-KW"/>
</dbReference>
<dbReference type="CDD" id="cd05387">
    <property type="entry name" value="BY-kinase"/>
    <property type="match status" value="1"/>
</dbReference>
<dbReference type="FunFam" id="3.40.50.300:FF:000527">
    <property type="entry name" value="Tyrosine-protein kinase etk"/>
    <property type="match status" value="1"/>
</dbReference>
<dbReference type="Gene3D" id="3.40.50.300">
    <property type="entry name" value="P-loop containing nucleotide triphosphate hydrolases"/>
    <property type="match status" value="1"/>
</dbReference>
<dbReference type="InterPro" id="IPR025669">
    <property type="entry name" value="AAA_dom"/>
</dbReference>
<dbReference type="InterPro" id="IPR050445">
    <property type="entry name" value="Bact_polysacc_biosynth/exp"/>
</dbReference>
<dbReference type="InterPro" id="IPR005700">
    <property type="entry name" value="EPS_ExoP-like"/>
</dbReference>
<dbReference type="InterPro" id="IPR032807">
    <property type="entry name" value="GNVR"/>
</dbReference>
<dbReference type="InterPro" id="IPR003856">
    <property type="entry name" value="LPS_length_determ_N_term"/>
</dbReference>
<dbReference type="InterPro" id="IPR027417">
    <property type="entry name" value="P-loop_NTPase"/>
</dbReference>
<dbReference type="InterPro" id="IPR005702">
    <property type="entry name" value="Wzc-like_C"/>
</dbReference>
<dbReference type="NCBIfam" id="TIGR01007">
    <property type="entry name" value="eps_fam"/>
    <property type="match status" value="1"/>
</dbReference>
<dbReference type="NCBIfam" id="TIGR01005">
    <property type="entry name" value="eps_transp_fam"/>
    <property type="match status" value="1"/>
</dbReference>
<dbReference type="PANTHER" id="PTHR32309">
    <property type="entry name" value="TYROSINE-PROTEIN KINASE"/>
    <property type="match status" value="1"/>
</dbReference>
<dbReference type="PANTHER" id="PTHR32309:SF32">
    <property type="entry name" value="TYROSINE-PROTEIN KINASE ETK-RELATED"/>
    <property type="match status" value="1"/>
</dbReference>
<dbReference type="Pfam" id="PF13614">
    <property type="entry name" value="AAA_31"/>
    <property type="match status" value="1"/>
</dbReference>
<dbReference type="Pfam" id="PF13807">
    <property type="entry name" value="GNVR"/>
    <property type="match status" value="1"/>
</dbReference>
<dbReference type="Pfam" id="PF23607">
    <property type="entry name" value="WZC_N"/>
    <property type="match status" value="1"/>
</dbReference>
<dbReference type="Pfam" id="PF02706">
    <property type="entry name" value="Wzz"/>
    <property type="match status" value="1"/>
</dbReference>
<dbReference type="SUPFAM" id="SSF52540">
    <property type="entry name" value="P-loop containing nucleoside triphosphate hydrolases"/>
    <property type="match status" value="1"/>
</dbReference>